<proteinExistence type="inferred from homology"/>
<keyword id="KW-0227">DNA damage</keyword>
<keyword id="KW-0234">DNA repair</keyword>
<keyword id="KW-0238">DNA-binding</keyword>
<keyword id="KW-0326">Glycosidase</keyword>
<keyword id="KW-0378">Hydrolase</keyword>
<keyword id="KW-0456">Lyase</keyword>
<keyword id="KW-0479">Metal-binding</keyword>
<keyword id="KW-0511">Multifunctional enzyme</keyword>
<keyword id="KW-1185">Reference proteome</keyword>
<keyword id="KW-0862">Zinc</keyword>
<keyword id="KW-0863">Zinc-finger</keyword>
<gene>
    <name evidence="2" type="primary">mutM</name>
    <name evidence="2" type="synonym">fpg</name>
    <name type="ordered locus">cu0789</name>
</gene>
<organism>
    <name type="scientific">Corynebacterium urealyticum (strain ATCC 43042 / DSM 7109)</name>
    <dbReference type="NCBI Taxonomy" id="504474"/>
    <lineage>
        <taxon>Bacteria</taxon>
        <taxon>Bacillati</taxon>
        <taxon>Actinomycetota</taxon>
        <taxon>Actinomycetes</taxon>
        <taxon>Mycobacteriales</taxon>
        <taxon>Corynebacteriaceae</taxon>
        <taxon>Corynebacterium</taxon>
    </lineage>
</organism>
<feature type="initiator methionine" description="Removed" evidence="1">
    <location>
        <position position="1"/>
    </location>
</feature>
<feature type="chain" id="PRO_1000094039" description="Formamidopyrimidine-DNA glycosylase">
    <location>
        <begin position="2"/>
        <end position="289"/>
    </location>
</feature>
<feature type="zinc finger region" description="FPG-type" evidence="2">
    <location>
        <begin position="254"/>
        <end position="288"/>
    </location>
</feature>
<feature type="active site" description="Schiff-base intermediate with DNA" evidence="2">
    <location>
        <position position="2"/>
    </location>
</feature>
<feature type="active site" description="Proton donor" evidence="2">
    <location>
        <position position="3"/>
    </location>
</feature>
<feature type="active site" description="Proton donor; for beta-elimination activity" evidence="2">
    <location>
        <position position="61"/>
    </location>
</feature>
<feature type="active site" description="Proton donor; for delta-elimination activity" evidence="2">
    <location>
        <position position="278"/>
    </location>
</feature>
<feature type="binding site" evidence="2">
    <location>
        <position position="97"/>
    </location>
    <ligand>
        <name>DNA</name>
        <dbReference type="ChEBI" id="CHEBI:16991"/>
    </ligand>
</feature>
<feature type="binding site" evidence="2">
    <location>
        <position position="119"/>
    </location>
    <ligand>
        <name>DNA</name>
        <dbReference type="ChEBI" id="CHEBI:16991"/>
    </ligand>
</feature>
<feature type="binding site" evidence="2">
    <location>
        <position position="168"/>
    </location>
    <ligand>
        <name>DNA</name>
        <dbReference type="ChEBI" id="CHEBI:16991"/>
    </ligand>
</feature>
<dbReference type="EC" id="3.2.2.23" evidence="2"/>
<dbReference type="EC" id="4.2.99.18" evidence="2"/>
<dbReference type="EMBL" id="AM942444">
    <property type="protein sequence ID" value="CAQ04749.1"/>
    <property type="molecule type" value="Genomic_DNA"/>
</dbReference>
<dbReference type="RefSeq" id="WP_012360038.1">
    <property type="nucleotide sequence ID" value="NC_010545.1"/>
</dbReference>
<dbReference type="SMR" id="B1VG60"/>
<dbReference type="STRING" id="504474.cu0789"/>
<dbReference type="GeneID" id="60603567"/>
<dbReference type="KEGG" id="cur:cu0789"/>
<dbReference type="eggNOG" id="COG0266">
    <property type="taxonomic scope" value="Bacteria"/>
</dbReference>
<dbReference type="HOGENOM" id="CLU_038423_1_2_11"/>
<dbReference type="Proteomes" id="UP000001727">
    <property type="component" value="Chromosome"/>
</dbReference>
<dbReference type="GO" id="GO:0034039">
    <property type="term" value="F:8-oxo-7,8-dihydroguanine DNA N-glycosylase activity"/>
    <property type="evidence" value="ECO:0007669"/>
    <property type="project" value="TreeGrafter"/>
</dbReference>
<dbReference type="GO" id="GO:0140078">
    <property type="term" value="F:class I DNA-(apurinic or apyrimidinic site) endonuclease activity"/>
    <property type="evidence" value="ECO:0007669"/>
    <property type="project" value="UniProtKB-EC"/>
</dbReference>
<dbReference type="GO" id="GO:0003684">
    <property type="term" value="F:damaged DNA binding"/>
    <property type="evidence" value="ECO:0007669"/>
    <property type="project" value="InterPro"/>
</dbReference>
<dbReference type="GO" id="GO:0008270">
    <property type="term" value="F:zinc ion binding"/>
    <property type="evidence" value="ECO:0007669"/>
    <property type="project" value="UniProtKB-UniRule"/>
</dbReference>
<dbReference type="GO" id="GO:0006284">
    <property type="term" value="P:base-excision repair"/>
    <property type="evidence" value="ECO:0007669"/>
    <property type="project" value="InterPro"/>
</dbReference>
<dbReference type="CDD" id="cd08966">
    <property type="entry name" value="EcFpg-like_N"/>
    <property type="match status" value="1"/>
</dbReference>
<dbReference type="FunFam" id="1.10.8.50:FF:000003">
    <property type="entry name" value="Formamidopyrimidine-DNA glycosylase"/>
    <property type="match status" value="1"/>
</dbReference>
<dbReference type="Gene3D" id="1.10.8.50">
    <property type="match status" value="1"/>
</dbReference>
<dbReference type="Gene3D" id="3.20.190.10">
    <property type="entry name" value="MutM-like, N-terminal"/>
    <property type="match status" value="1"/>
</dbReference>
<dbReference type="HAMAP" id="MF_00103">
    <property type="entry name" value="Fapy_DNA_glycosyl"/>
    <property type="match status" value="1"/>
</dbReference>
<dbReference type="InterPro" id="IPR015886">
    <property type="entry name" value="DNA_glyclase/AP_lyase_DNA-bd"/>
</dbReference>
<dbReference type="InterPro" id="IPR015887">
    <property type="entry name" value="DNA_glyclase_Znf_dom_DNA_BS"/>
</dbReference>
<dbReference type="InterPro" id="IPR020629">
    <property type="entry name" value="Formamido-pyr_DNA_Glyclase"/>
</dbReference>
<dbReference type="InterPro" id="IPR012319">
    <property type="entry name" value="FPG_cat"/>
</dbReference>
<dbReference type="InterPro" id="IPR035937">
    <property type="entry name" value="MutM-like_N-ter"/>
</dbReference>
<dbReference type="InterPro" id="IPR010979">
    <property type="entry name" value="Ribosomal_uS13-like_H2TH"/>
</dbReference>
<dbReference type="InterPro" id="IPR000214">
    <property type="entry name" value="Znf_DNA_glyclase/AP_lyase"/>
</dbReference>
<dbReference type="InterPro" id="IPR010663">
    <property type="entry name" value="Znf_FPG/IleRS"/>
</dbReference>
<dbReference type="NCBIfam" id="TIGR00577">
    <property type="entry name" value="fpg"/>
    <property type="match status" value="1"/>
</dbReference>
<dbReference type="NCBIfam" id="NF002211">
    <property type="entry name" value="PRK01103.1"/>
    <property type="match status" value="1"/>
</dbReference>
<dbReference type="PANTHER" id="PTHR22993">
    <property type="entry name" value="FORMAMIDOPYRIMIDINE-DNA GLYCOSYLASE"/>
    <property type="match status" value="1"/>
</dbReference>
<dbReference type="PANTHER" id="PTHR22993:SF9">
    <property type="entry name" value="FORMAMIDOPYRIMIDINE-DNA GLYCOSYLASE"/>
    <property type="match status" value="1"/>
</dbReference>
<dbReference type="Pfam" id="PF01149">
    <property type="entry name" value="Fapy_DNA_glyco"/>
    <property type="match status" value="1"/>
</dbReference>
<dbReference type="Pfam" id="PF06831">
    <property type="entry name" value="H2TH"/>
    <property type="match status" value="1"/>
</dbReference>
<dbReference type="Pfam" id="PF06827">
    <property type="entry name" value="zf-FPG_IleRS"/>
    <property type="match status" value="1"/>
</dbReference>
<dbReference type="SMART" id="SM00898">
    <property type="entry name" value="Fapy_DNA_glyco"/>
    <property type="match status" value="1"/>
</dbReference>
<dbReference type="SMART" id="SM01232">
    <property type="entry name" value="H2TH"/>
    <property type="match status" value="1"/>
</dbReference>
<dbReference type="SUPFAM" id="SSF57716">
    <property type="entry name" value="Glucocorticoid receptor-like (DNA-binding domain)"/>
    <property type="match status" value="1"/>
</dbReference>
<dbReference type="SUPFAM" id="SSF81624">
    <property type="entry name" value="N-terminal domain of MutM-like DNA repair proteins"/>
    <property type="match status" value="1"/>
</dbReference>
<dbReference type="SUPFAM" id="SSF46946">
    <property type="entry name" value="S13-like H2TH domain"/>
    <property type="match status" value="1"/>
</dbReference>
<dbReference type="PROSITE" id="PS51068">
    <property type="entry name" value="FPG_CAT"/>
    <property type="match status" value="1"/>
</dbReference>
<dbReference type="PROSITE" id="PS01242">
    <property type="entry name" value="ZF_FPG_1"/>
    <property type="match status" value="1"/>
</dbReference>
<dbReference type="PROSITE" id="PS51066">
    <property type="entry name" value="ZF_FPG_2"/>
    <property type="match status" value="1"/>
</dbReference>
<evidence type="ECO:0000250" key="1"/>
<evidence type="ECO:0000255" key="2">
    <source>
        <dbReference type="HAMAP-Rule" id="MF_00103"/>
    </source>
</evidence>
<comment type="function">
    <text evidence="2">Involved in base excision repair of DNA damaged by oxidation or by mutagenic agents. Acts as a DNA glycosylase that recognizes and removes damaged bases. Has a preference for oxidized purines, such as 7,8-dihydro-8-oxoguanine (8-oxoG). Has AP (apurinic/apyrimidinic) lyase activity and introduces nicks in the DNA strand. Cleaves the DNA backbone by beta-delta elimination to generate a single-strand break at the site of the removed base with both 3'- and 5'-phosphates.</text>
</comment>
<comment type="catalytic activity">
    <reaction evidence="2">
        <text>Hydrolysis of DNA containing ring-opened 7-methylguanine residues, releasing 2,6-diamino-4-hydroxy-5-(N-methyl)formamidopyrimidine.</text>
        <dbReference type="EC" id="3.2.2.23"/>
    </reaction>
</comment>
<comment type="catalytic activity">
    <reaction evidence="2">
        <text>2'-deoxyribonucleotide-(2'-deoxyribose 5'-phosphate)-2'-deoxyribonucleotide-DNA = a 3'-end 2'-deoxyribonucleotide-(2,3-dehydro-2,3-deoxyribose 5'-phosphate)-DNA + a 5'-end 5'-phospho-2'-deoxyribonucleoside-DNA + H(+)</text>
        <dbReference type="Rhea" id="RHEA:66592"/>
        <dbReference type="Rhea" id="RHEA-COMP:13180"/>
        <dbReference type="Rhea" id="RHEA-COMP:16897"/>
        <dbReference type="Rhea" id="RHEA-COMP:17067"/>
        <dbReference type="ChEBI" id="CHEBI:15378"/>
        <dbReference type="ChEBI" id="CHEBI:136412"/>
        <dbReference type="ChEBI" id="CHEBI:157695"/>
        <dbReference type="ChEBI" id="CHEBI:167181"/>
        <dbReference type="EC" id="4.2.99.18"/>
    </reaction>
</comment>
<comment type="cofactor">
    <cofactor evidence="2">
        <name>Zn(2+)</name>
        <dbReference type="ChEBI" id="CHEBI:29105"/>
    </cofactor>
    <text evidence="2">Binds 1 zinc ion per subunit.</text>
</comment>
<comment type="subunit">
    <text evidence="2">Monomer.</text>
</comment>
<comment type="similarity">
    <text evidence="2">Belongs to the FPG family.</text>
</comment>
<reference key="1">
    <citation type="journal article" date="2008" name="J. Biotechnol.">
        <title>The lifestyle of Corynebacterium urealyticum derived from its complete genome sequence established by pyrosequencing.</title>
        <authorList>
            <person name="Tauch A."/>
            <person name="Trost E."/>
            <person name="Tilker A."/>
            <person name="Ludewig U."/>
            <person name="Schneiker S."/>
            <person name="Goesmann A."/>
            <person name="Arnold W."/>
            <person name="Bekel T."/>
            <person name="Brinkrolf K."/>
            <person name="Brune I."/>
            <person name="Goetker S."/>
            <person name="Kalinowski J."/>
            <person name="Kamp P.-B."/>
            <person name="Lobo F.P."/>
            <person name="Viehoever P."/>
            <person name="Weisshaar B."/>
            <person name="Soriano F."/>
            <person name="Droege M."/>
            <person name="Puehler A."/>
        </authorList>
    </citation>
    <scope>NUCLEOTIDE SEQUENCE [LARGE SCALE GENOMIC DNA]</scope>
    <source>
        <strain>ATCC 43042 / DSM 7109</strain>
    </source>
</reference>
<sequence>MPELPEVEVVRRGLEEHLSDGVIHDVDVRHPRAVRAQPGGAAELVALLDGARIQSIERRGKYMWLVLNNGRALFVHLGMSGQMLIHEASDPALPTTHVRISARVDVGEKDLVLSFVDQRTFGQWQVTPVVADPHGGFTGVPVPVAHIAPDPFEAVFDPAVVARRLRAKKTDVKRAILDQTLVSGIGNIYADEALWAAGVAPSRRTRGMRQRDAVAVLEQAGAVMRRALAQGGTSFDSLYVNVNGASGYFARSLNAYGRAGKPCPRCGEPIVRVQWTNRSSHFCPQCQSS</sequence>
<protein>
    <recommendedName>
        <fullName evidence="2">Formamidopyrimidine-DNA glycosylase</fullName>
        <shortName evidence="2">Fapy-DNA glycosylase</shortName>
        <ecNumber evidence="2">3.2.2.23</ecNumber>
    </recommendedName>
    <alternativeName>
        <fullName evidence="2">DNA-(apurinic or apyrimidinic site) lyase MutM</fullName>
        <shortName evidence="2">AP lyase MutM</shortName>
        <ecNumber evidence="2">4.2.99.18</ecNumber>
    </alternativeName>
</protein>
<accession>B1VG60</accession>
<name>FPG_CORU7</name>